<reference key="1">
    <citation type="journal article" date="2004" name="Nucleic Acids Res.">
        <title>Unique features revealed by the genome sequence of Acinetobacter sp. ADP1, a versatile and naturally transformation competent bacterium.</title>
        <authorList>
            <person name="Barbe V."/>
            <person name="Vallenet D."/>
            <person name="Fonknechten N."/>
            <person name="Kreimeyer A."/>
            <person name="Oztas S."/>
            <person name="Labarre L."/>
            <person name="Cruveiller S."/>
            <person name="Robert C."/>
            <person name="Duprat S."/>
            <person name="Wincker P."/>
            <person name="Ornston L.N."/>
            <person name="Weissenbach J."/>
            <person name="Marliere P."/>
            <person name="Cohen G.N."/>
            <person name="Medigue C."/>
        </authorList>
    </citation>
    <scope>NUCLEOTIDE SEQUENCE [LARGE SCALE GENOMIC DNA]</scope>
    <source>
        <strain>ATCC 33305 / BD413 / ADP1</strain>
    </source>
</reference>
<evidence type="ECO:0000255" key="1">
    <source>
        <dbReference type="HAMAP-Rule" id="MF_00137"/>
    </source>
</evidence>
<keyword id="KW-0067">ATP-binding</keyword>
<keyword id="KW-0436">Ligase</keyword>
<keyword id="KW-0547">Nucleotide-binding</keyword>
<keyword id="KW-0658">Purine biosynthesis</keyword>
<dbReference type="EC" id="6.3.2.6" evidence="1"/>
<dbReference type="EMBL" id="CR543861">
    <property type="protein sequence ID" value="CAG70227.1"/>
    <property type="molecule type" value="Genomic_DNA"/>
</dbReference>
<dbReference type="RefSeq" id="WP_004923151.1">
    <property type="nucleotide sequence ID" value="NC_005966.1"/>
</dbReference>
<dbReference type="SMR" id="Q6F6U0"/>
<dbReference type="STRING" id="202950.GCA_001485005_01630"/>
<dbReference type="GeneID" id="45235757"/>
<dbReference type="KEGG" id="aci:ACIAD3587"/>
<dbReference type="eggNOG" id="COG0152">
    <property type="taxonomic scope" value="Bacteria"/>
</dbReference>
<dbReference type="HOGENOM" id="CLU_061495_2_0_6"/>
<dbReference type="OrthoDB" id="9801549at2"/>
<dbReference type="BioCyc" id="ASP62977:ACIAD_RS16230-MONOMER"/>
<dbReference type="UniPathway" id="UPA00074">
    <property type="reaction ID" value="UER00131"/>
</dbReference>
<dbReference type="Proteomes" id="UP000000430">
    <property type="component" value="Chromosome"/>
</dbReference>
<dbReference type="GO" id="GO:0005829">
    <property type="term" value="C:cytosol"/>
    <property type="evidence" value="ECO:0007669"/>
    <property type="project" value="TreeGrafter"/>
</dbReference>
<dbReference type="GO" id="GO:0005524">
    <property type="term" value="F:ATP binding"/>
    <property type="evidence" value="ECO:0007669"/>
    <property type="project" value="UniProtKB-KW"/>
</dbReference>
<dbReference type="GO" id="GO:0004639">
    <property type="term" value="F:phosphoribosylaminoimidazolesuccinocarboxamide synthase activity"/>
    <property type="evidence" value="ECO:0007669"/>
    <property type="project" value="UniProtKB-UniRule"/>
</dbReference>
<dbReference type="GO" id="GO:0006189">
    <property type="term" value="P:'de novo' IMP biosynthetic process"/>
    <property type="evidence" value="ECO:0007669"/>
    <property type="project" value="UniProtKB-UniRule"/>
</dbReference>
<dbReference type="GO" id="GO:0009236">
    <property type="term" value="P:cobalamin biosynthetic process"/>
    <property type="evidence" value="ECO:0007669"/>
    <property type="project" value="InterPro"/>
</dbReference>
<dbReference type="CDD" id="cd01415">
    <property type="entry name" value="SAICAR_synt_PurC"/>
    <property type="match status" value="1"/>
</dbReference>
<dbReference type="FunFam" id="3.30.200.20:FF:000086">
    <property type="entry name" value="Phosphoribosylaminoimidazole-succinocarboxamide synthase"/>
    <property type="match status" value="1"/>
</dbReference>
<dbReference type="FunFam" id="3.30.470.20:FF:000006">
    <property type="entry name" value="Phosphoribosylaminoimidazole-succinocarboxamide synthase"/>
    <property type="match status" value="1"/>
</dbReference>
<dbReference type="Gene3D" id="3.30.470.20">
    <property type="entry name" value="ATP-grasp fold, B domain"/>
    <property type="match status" value="1"/>
</dbReference>
<dbReference type="Gene3D" id="3.30.200.20">
    <property type="entry name" value="Phosphorylase Kinase, domain 1"/>
    <property type="match status" value="1"/>
</dbReference>
<dbReference type="HAMAP" id="MF_00137">
    <property type="entry name" value="SAICAR_synth"/>
    <property type="match status" value="1"/>
</dbReference>
<dbReference type="InterPro" id="IPR028923">
    <property type="entry name" value="SAICAR_synt/ADE2_N"/>
</dbReference>
<dbReference type="InterPro" id="IPR033934">
    <property type="entry name" value="SAICAR_synt_PurC"/>
</dbReference>
<dbReference type="InterPro" id="IPR001636">
    <property type="entry name" value="SAICAR_synth"/>
</dbReference>
<dbReference type="InterPro" id="IPR050089">
    <property type="entry name" value="SAICAR_synthetase"/>
</dbReference>
<dbReference type="InterPro" id="IPR018236">
    <property type="entry name" value="SAICAR_synthetase_CS"/>
</dbReference>
<dbReference type="NCBIfam" id="TIGR00081">
    <property type="entry name" value="purC"/>
    <property type="match status" value="1"/>
</dbReference>
<dbReference type="PANTHER" id="PTHR43599">
    <property type="entry name" value="MULTIFUNCTIONAL PROTEIN ADE2"/>
    <property type="match status" value="1"/>
</dbReference>
<dbReference type="PANTHER" id="PTHR43599:SF3">
    <property type="entry name" value="SI:DKEY-6E2.2"/>
    <property type="match status" value="1"/>
</dbReference>
<dbReference type="Pfam" id="PF01259">
    <property type="entry name" value="SAICAR_synt"/>
    <property type="match status" value="1"/>
</dbReference>
<dbReference type="SUPFAM" id="SSF56104">
    <property type="entry name" value="SAICAR synthase-like"/>
    <property type="match status" value="1"/>
</dbReference>
<dbReference type="PROSITE" id="PS01057">
    <property type="entry name" value="SAICAR_SYNTHETASE_1"/>
    <property type="match status" value="1"/>
</dbReference>
<dbReference type="PROSITE" id="PS01058">
    <property type="entry name" value="SAICAR_SYNTHETASE_2"/>
    <property type="match status" value="1"/>
</dbReference>
<gene>
    <name evidence="1" type="primary">purC</name>
    <name type="ordered locus">ACIAD3587</name>
</gene>
<feature type="chain" id="PRO_1000018659" description="Phosphoribosylaminoimidazole-succinocarboxamide synthase">
    <location>
        <begin position="1"/>
        <end position="239"/>
    </location>
</feature>
<accession>Q6F6U0</accession>
<name>PUR7_ACIAD</name>
<proteinExistence type="inferred from homology"/>
<comment type="catalytic activity">
    <reaction evidence="1">
        <text>5-amino-1-(5-phospho-D-ribosyl)imidazole-4-carboxylate + L-aspartate + ATP = (2S)-2-[5-amino-1-(5-phospho-beta-D-ribosyl)imidazole-4-carboxamido]succinate + ADP + phosphate + 2 H(+)</text>
        <dbReference type="Rhea" id="RHEA:22628"/>
        <dbReference type="ChEBI" id="CHEBI:15378"/>
        <dbReference type="ChEBI" id="CHEBI:29991"/>
        <dbReference type="ChEBI" id="CHEBI:30616"/>
        <dbReference type="ChEBI" id="CHEBI:43474"/>
        <dbReference type="ChEBI" id="CHEBI:58443"/>
        <dbReference type="ChEBI" id="CHEBI:77657"/>
        <dbReference type="ChEBI" id="CHEBI:456216"/>
        <dbReference type="EC" id="6.3.2.6"/>
    </reaction>
</comment>
<comment type="pathway">
    <text evidence="1">Purine metabolism; IMP biosynthesis via de novo pathway; 5-amino-1-(5-phospho-D-ribosyl)imidazole-4-carboxamide from 5-amino-1-(5-phospho-D-ribosyl)imidazole-4-carboxylate: step 1/2.</text>
</comment>
<comment type="similarity">
    <text evidence="1">Belongs to the SAICAR synthetase family.</text>
</comment>
<organism>
    <name type="scientific">Acinetobacter baylyi (strain ATCC 33305 / BD413 / ADP1)</name>
    <dbReference type="NCBI Taxonomy" id="62977"/>
    <lineage>
        <taxon>Bacteria</taxon>
        <taxon>Pseudomonadati</taxon>
        <taxon>Pseudomonadota</taxon>
        <taxon>Gammaproteobacteria</taxon>
        <taxon>Moraxellales</taxon>
        <taxon>Moraxellaceae</taxon>
        <taxon>Acinetobacter</taxon>
    </lineage>
</organism>
<protein>
    <recommendedName>
        <fullName evidence="1">Phosphoribosylaminoimidazole-succinocarboxamide synthase</fullName>
        <ecNumber evidence="1">6.3.2.6</ecNumber>
    </recommendedName>
    <alternativeName>
        <fullName evidence="1">SAICAR synthetase</fullName>
    </alternativeName>
</protein>
<sequence>MLKQTLLYTGKAKSVYETDSADHLILVFRDDASAFNGEKIEQLDRKGKVNNRFNAFIMEKLAEAGIETHFEKLLTPNEVLVKKLNMIPVECVIRNYAAGSLCRRLGVEEGKQLTPPTFELFFKDDALGDPMVNESQAIALGWATADQLEKMKELTYQVNDVLKALFDAGNMILVDFKLEFGVFHDRIVLGDEFSPDGCRLWDKDTKKKLDKDRFRQGLGGVVEAYEEVAARLGINLDDI</sequence>